<dbReference type="EC" id="2.1.1.14" evidence="1"/>
<dbReference type="EMBL" id="CP000419">
    <property type="protein sequence ID" value="ABJ66076.1"/>
    <property type="molecule type" value="Genomic_DNA"/>
</dbReference>
<dbReference type="RefSeq" id="WP_002950451.1">
    <property type="nucleotide sequence ID" value="NC_008532.1"/>
</dbReference>
<dbReference type="SMR" id="Q03L46"/>
<dbReference type="GeneID" id="66898680"/>
<dbReference type="KEGG" id="ste:STER_0831"/>
<dbReference type="HOGENOM" id="CLU_013175_0_0_9"/>
<dbReference type="UniPathway" id="UPA00051">
    <property type="reaction ID" value="UER00082"/>
</dbReference>
<dbReference type="GO" id="GO:0003871">
    <property type="term" value="F:5-methyltetrahydropteroyltriglutamate-homocysteine S-methyltransferase activity"/>
    <property type="evidence" value="ECO:0007669"/>
    <property type="project" value="UniProtKB-UniRule"/>
</dbReference>
<dbReference type="GO" id="GO:0008270">
    <property type="term" value="F:zinc ion binding"/>
    <property type="evidence" value="ECO:0007669"/>
    <property type="project" value="InterPro"/>
</dbReference>
<dbReference type="GO" id="GO:0009086">
    <property type="term" value="P:methionine biosynthetic process"/>
    <property type="evidence" value="ECO:0007669"/>
    <property type="project" value="UniProtKB-UniRule"/>
</dbReference>
<dbReference type="GO" id="GO:0032259">
    <property type="term" value="P:methylation"/>
    <property type="evidence" value="ECO:0007669"/>
    <property type="project" value="UniProtKB-KW"/>
</dbReference>
<dbReference type="CDD" id="cd03311">
    <property type="entry name" value="CIMS_C_terminal_like"/>
    <property type="match status" value="1"/>
</dbReference>
<dbReference type="CDD" id="cd03312">
    <property type="entry name" value="CIMS_N_terminal_like"/>
    <property type="match status" value="1"/>
</dbReference>
<dbReference type="Gene3D" id="3.20.20.210">
    <property type="match status" value="2"/>
</dbReference>
<dbReference type="HAMAP" id="MF_00172">
    <property type="entry name" value="Meth_synth"/>
    <property type="match status" value="1"/>
</dbReference>
<dbReference type="InterPro" id="IPR013215">
    <property type="entry name" value="Cbl-indep_Met_Synth_N"/>
</dbReference>
<dbReference type="InterPro" id="IPR006276">
    <property type="entry name" value="Cobalamin-indep_Met_synthase"/>
</dbReference>
<dbReference type="InterPro" id="IPR002629">
    <property type="entry name" value="Met_Synth_C/arc"/>
</dbReference>
<dbReference type="InterPro" id="IPR038071">
    <property type="entry name" value="UROD/MetE-like_sf"/>
</dbReference>
<dbReference type="NCBIfam" id="TIGR01371">
    <property type="entry name" value="met_syn_B12ind"/>
    <property type="match status" value="1"/>
</dbReference>
<dbReference type="NCBIfam" id="NF003556">
    <property type="entry name" value="PRK05222.1"/>
    <property type="match status" value="1"/>
</dbReference>
<dbReference type="PANTHER" id="PTHR30519">
    <property type="entry name" value="5-METHYLTETRAHYDROPTEROYLTRIGLUTAMATE--HOMOCYSTEINE METHYLTRANSFERASE"/>
    <property type="match status" value="1"/>
</dbReference>
<dbReference type="Pfam" id="PF08267">
    <property type="entry name" value="Meth_synt_1"/>
    <property type="match status" value="1"/>
</dbReference>
<dbReference type="Pfam" id="PF01717">
    <property type="entry name" value="Meth_synt_2"/>
    <property type="match status" value="1"/>
</dbReference>
<dbReference type="PIRSF" id="PIRSF000382">
    <property type="entry name" value="MeTrfase_B12_ind"/>
    <property type="match status" value="1"/>
</dbReference>
<dbReference type="SUPFAM" id="SSF51726">
    <property type="entry name" value="UROD/MetE-like"/>
    <property type="match status" value="2"/>
</dbReference>
<name>METE_STRTD</name>
<evidence type="ECO:0000255" key="1">
    <source>
        <dbReference type="HAMAP-Rule" id="MF_00172"/>
    </source>
</evidence>
<reference key="1">
    <citation type="journal article" date="2006" name="Proc. Natl. Acad. Sci. U.S.A.">
        <title>Comparative genomics of the lactic acid bacteria.</title>
        <authorList>
            <person name="Makarova K.S."/>
            <person name="Slesarev A."/>
            <person name="Wolf Y.I."/>
            <person name="Sorokin A."/>
            <person name="Mirkin B."/>
            <person name="Koonin E.V."/>
            <person name="Pavlov A."/>
            <person name="Pavlova N."/>
            <person name="Karamychev V."/>
            <person name="Polouchine N."/>
            <person name="Shakhova V."/>
            <person name="Grigoriev I."/>
            <person name="Lou Y."/>
            <person name="Rohksar D."/>
            <person name="Lucas S."/>
            <person name="Huang K."/>
            <person name="Goodstein D.M."/>
            <person name="Hawkins T."/>
            <person name="Plengvidhya V."/>
            <person name="Welker D."/>
            <person name="Hughes J."/>
            <person name="Goh Y."/>
            <person name="Benson A."/>
            <person name="Baldwin K."/>
            <person name="Lee J.-H."/>
            <person name="Diaz-Muniz I."/>
            <person name="Dosti B."/>
            <person name="Smeianov V."/>
            <person name="Wechter W."/>
            <person name="Barabote R."/>
            <person name="Lorca G."/>
            <person name="Altermann E."/>
            <person name="Barrangou R."/>
            <person name="Ganesan B."/>
            <person name="Xie Y."/>
            <person name="Rawsthorne H."/>
            <person name="Tamir D."/>
            <person name="Parker C."/>
            <person name="Breidt F."/>
            <person name="Broadbent J.R."/>
            <person name="Hutkins R."/>
            <person name="O'Sullivan D."/>
            <person name="Steele J."/>
            <person name="Unlu G."/>
            <person name="Saier M.H. Jr."/>
            <person name="Klaenhammer T."/>
            <person name="Richardson P."/>
            <person name="Kozyavkin S."/>
            <person name="Weimer B.C."/>
            <person name="Mills D.A."/>
        </authorList>
    </citation>
    <scope>NUCLEOTIDE SEQUENCE [LARGE SCALE GENOMIC DNA]</scope>
    <source>
        <strain>ATCC BAA-491 / LMD-9</strain>
    </source>
</reference>
<feature type="chain" id="PRO_1000017286" description="5-methyltetrahydropteroyltriglutamate--homocysteine methyltransferase">
    <location>
        <begin position="1"/>
        <end position="749"/>
    </location>
</feature>
<feature type="active site" description="Proton donor" evidence="1">
    <location>
        <position position="689"/>
    </location>
</feature>
<feature type="binding site" evidence="1">
    <location>
        <begin position="15"/>
        <end position="18"/>
    </location>
    <ligand>
        <name>5-methyltetrahydropteroyltri-L-glutamate</name>
        <dbReference type="ChEBI" id="CHEBI:58207"/>
    </ligand>
</feature>
<feature type="binding site" evidence="1">
    <location>
        <position position="114"/>
    </location>
    <ligand>
        <name>5-methyltetrahydropteroyltri-L-glutamate</name>
        <dbReference type="ChEBI" id="CHEBI:58207"/>
    </ligand>
</feature>
<feature type="binding site" evidence="1">
    <location>
        <begin position="425"/>
        <end position="427"/>
    </location>
    <ligand>
        <name>L-homocysteine</name>
        <dbReference type="ChEBI" id="CHEBI:58199"/>
    </ligand>
</feature>
<feature type="binding site" evidence="1">
    <location>
        <begin position="425"/>
        <end position="427"/>
    </location>
    <ligand>
        <name>L-methionine</name>
        <dbReference type="ChEBI" id="CHEBI:57844"/>
    </ligand>
</feature>
<feature type="binding site" evidence="1">
    <location>
        <position position="478"/>
    </location>
    <ligand>
        <name>L-homocysteine</name>
        <dbReference type="ChEBI" id="CHEBI:58199"/>
    </ligand>
</feature>
<feature type="binding site" evidence="1">
    <location>
        <position position="478"/>
    </location>
    <ligand>
        <name>L-methionine</name>
        <dbReference type="ChEBI" id="CHEBI:57844"/>
    </ligand>
</feature>
<feature type="binding site" evidence="1">
    <location>
        <position position="555"/>
    </location>
    <ligand>
        <name>5-methyltetrahydropteroyltri-L-glutamate</name>
        <dbReference type="ChEBI" id="CHEBI:58207"/>
    </ligand>
</feature>
<feature type="binding site" evidence="1">
    <location>
        <position position="593"/>
    </location>
    <ligand>
        <name>L-homocysteine</name>
        <dbReference type="ChEBI" id="CHEBI:58199"/>
    </ligand>
</feature>
<feature type="binding site" evidence="1">
    <location>
        <position position="593"/>
    </location>
    <ligand>
        <name>L-methionine</name>
        <dbReference type="ChEBI" id="CHEBI:57844"/>
    </ligand>
</feature>
<feature type="binding site" evidence="1">
    <location>
        <position position="599"/>
    </location>
    <ligand>
        <name>5-methyltetrahydropteroyltri-L-glutamate</name>
        <dbReference type="ChEBI" id="CHEBI:58207"/>
    </ligand>
</feature>
<feature type="binding site" evidence="1">
    <location>
        <position position="636"/>
    </location>
    <ligand>
        <name>Zn(2+)</name>
        <dbReference type="ChEBI" id="CHEBI:29105"/>
        <note>catalytic</note>
    </ligand>
</feature>
<feature type="binding site" evidence="1">
    <location>
        <position position="638"/>
    </location>
    <ligand>
        <name>Zn(2+)</name>
        <dbReference type="ChEBI" id="CHEBI:29105"/>
        <note>catalytic</note>
    </ligand>
</feature>
<feature type="binding site" evidence="1">
    <location>
        <position position="660"/>
    </location>
    <ligand>
        <name>Zn(2+)</name>
        <dbReference type="ChEBI" id="CHEBI:29105"/>
        <note>catalytic</note>
    </ligand>
</feature>
<feature type="binding site" evidence="1">
    <location>
        <position position="721"/>
    </location>
    <ligand>
        <name>Zn(2+)</name>
        <dbReference type="ChEBI" id="CHEBI:29105"/>
        <note>catalytic</note>
    </ligand>
</feature>
<keyword id="KW-0028">Amino-acid biosynthesis</keyword>
<keyword id="KW-0479">Metal-binding</keyword>
<keyword id="KW-0486">Methionine biosynthesis</keyword>
<keyword id="KW-0489">Methyltransferase</keyword>
<keyword id="KW-0677">Repeat</keyword>
<keyword id="KW-0808">Transferase</keyword>
<keyword id="KW-0862">Zinc</keyword>
<sequence length="749" mass="84601">MSTTIIGFPRLGEFRELKFTTEKYFRNEITADELLAAAKDLRAKHWNIVKEKGITEIPSNDFSHYDNFLDAAFLFNVVPESVKNLDLTELEQYFALARGYQGEKGDVRALPMKKWFNTNYHYIVPKFEKTTAVKLAGHKIFDEYQEAKDLGLDTRPVVVGPFTFLQLSDFEDGVKAEDFVDSFIAAYQDVFAKLAELGATRIQLDEPALVKDLTADEKALFLNLYNKILADKKGLEVLIQTYFGDVRDVYNDLVNLPVDAIGLDFVEGKKTLELVKGGFPADKTLYAGIVNGKNIWRNNYEKSLAVLEQIPAEKIVLTSSCSLLHVPFTTANEEFEPAILNHFAFAVEKLDELRDLDAIRNGQGAESLAANKELFAIERVGANAELRARIAGLTEADYTRLPAFAEREAIQKDAFKLPLLPTTTIGSFPQTKEVRAKRLAFRKNELSQEEYDAFLAEIIDEWIKWQEEVGFDVLVHGEFERNDMVEYFGQNLSGYLFSKNGWVQSYGMRGVKPPIIWGDVTRLNPITVKWSSYAQSRTDKPVKGMLTGPVTILNWSFPREDISIKDSTLQIALAIKDEVLDLEAAGIKIIQIDEAALREKLPLRRSDWYEDYLDWAIPAFRLVHSTVAPDTQIHTHMCYSEFTDIIPAIDNLDADVISFEASRSNLEILDELKAQNFQTEVGPGVYDIHSPRVPQDGEIDHTIEAILAKVPSSKVWINPDCGLKTRGIKETKESLTKLLEAAKAARKNL</sequence>
<accession>Q03L46</accession>
<comment type="function">
    <text evidence="1">Catalyzes the transfer of a methyl group from 5-methyltetrahydrofolate to homocysteine resulting in methionine formation.</text>
</comment>
<comment type="catalytic activity">
    <reaction evidence="1">
        <text>5-methyltetrahydropteroyltri-L-glutamate + L-homocysteine = tetrahydropteroyltri-L-glutamate + L-methionine</text>
        <dbReference type="Rhea" id="RHEA:21196"/>
        <dbReference type="ChEBI" id="CHEBI:57844"/>
        <dbReference type="ChEBI" id="CHEBI:58140"/>
        <dbReference type="ChEBI" id="CHEBI:58199"/>
        <dbReference type="ChEBI" id="CHEBI:58207"/>
        <dbReference type="EC" id="2.1.1.14"/>
    </reaction>
</comment>
<comment type="cofactor">
    <cofactor evidence="1">
        <name>Zn(2+)</name>
        <dbReference type="ChEBI" id="CHEBI:29105"/>
    </cofactor>
    <text evidence="1">Binds 1 zinc ion per subunit.</text>
</comment>
<comment type="pathway">
    <text evidence="1">Amino-acid biosynthesis; L-methionine biosynthesis via de novo pathway; L-methionine from L-homocysteine (MetE route): step 1/1.</text>
</comment>
<comment type="similarity">
    <text evidence="1">Belongs to the vitamin-B12 independent methionine synthase family.</text>
</comment>
<protein>
    <recommendedName>
        <fullName evidence="1">5-methyltetrahydropteroyltriglutamate--homocysteine methyltransferase</fullName>
        <ecNumber evidence="1">2.1.1.14</ecNumber>
    </recommendedName>
    <alternativeName>
        <fullName evidence="1">Cobalamin-independent methionine synthase</fullName>
    </alternativeName>
    <alternativeName>
        <fullName evidence="1">Methionine synthase, vitamin-B12 independent isozyme</fullName>
    </alternativeName>
</protein>
<proteinExistence type="inferred from homology"/>
<gene>
    <name evidence="1" type="primary">metE</name>
    <name type="ordered locus">STER_0831</name>
</gene>
<organism>
    <name type="scientific">Streptococcus thermophilus (strain ATCC BAA-491 / LMD-9)</name>
    <dbReference type="NCBI Taxonomy" id="322159"/>
    <lineage>
        <taxon>Bacteria</taxon>
        <taxon>Bacillati</taxon>
        <taxon>Bacillota</taxon>
        <taxon>Bacilli</taxon>
        <taxon>Lactobacillales</taxon>
        <taxon>Streptococcaceae</taxon>
        <taxon>Streptococcus</taxon>
    </lineage>
</organism>